<gene>
    <name evidence="1" type="primary">ureC</name>
    <name type="ordered locus">str0283</name>
</gene>
<evidence type="ECO:0000255" key="1">
    <source>
        <dbReference type="HAMAP-Rule" id="MF_01953"/>
    </source>
</evidence>
<protein>
    <recommendedName>
        <fullName evidence="1">Urease subunit alpha</fullName>
        <ecNumber evidence="1">3.5.1.5</ecNumber>
    </recommendedName>
    <alternativeName>
        <fullName evidence="1">Urea amidohydrolase subunit alpha</fullName>
    </alternativeName>
</protein>
<feature type="chain" id="PRO_0000234184" description="Urease subunit alpha">
    <location>
        <begin position="1"/>
        <end position="572"/>
    </location>
</feature>
<feature type="domain" description="Urease" evidence="1">
    <location>
        <begin position="133"/>
        <end position="572"/>
    </location>
</feature>
<feature type="active site" description="Proton donor" evidence="1">
    <location>
        <position position="324"/>
    </location>
</feature>
<feature type="binding site" evidence="1">
    <location>
        <position position="138"/>
    </location>
    <ligand>
        <name>Ni(2+)</name>
        <dbReference type="ChEBI" id="CHEBI:49786"/>
        <label>1</label>
    </ligand>
</feature>
<feature type="binding site" evidence="1">
    <location>
        <position position="140"/>
    </location>
    <ligand>
        <name>Ni(2+)</name>
        <dbReference type="ChEBI" id="CHEBI:49786"/>
        <label>1</label>
    </ligand>
</feature>
<feature type="binding site" description="via carbamate group" evidence="1">
    <location>
        <position position="221"/>
    </location>
    <ligand>
        <name>Ni(2+)</name>
        <dbReference type="ChEBI" id="CHEBI:49786"/>
        <label>1</label>
    </ligand>
</feature>
<feature type="binding site" description="via carbamate group" evidence="1">
    <location>
        <position position="221"/>
    </location>
    <ligand>
        <name>Ni(2+)</name>
        <dbReference type="ChEBI" id="CHEBI:49786"/>
        <label>2</label>
    </ligand>
</feature>
<feature type="binding site" evidence="1">
    <location>
        <position position="223"/>
    </location>
    <ligand>
        <name>substrate</name>
    </ligand>
</feature>
<feature type="binding site" evidence="1">
    <location>
        <position position="250"/>
    </location>
    <ligand>
        <name>Ni(2+)</name>
        <dbReference type="ChEBI" id="CHEBI:49786"/>
        <label>2</label>
    </ligand>
</feature>
<feature type="binding site" evidence="1">
    <location>
        <position position="276"/>
    </location>
    <ligand>
        <name>Ni(2+)</name>
        <dbReference type="ChEBI" id="CHEBI:49786"/>
        <label>2</label>
    </ligand>
</feature>
<feature type="binding site" evidence="1">
    <location>
        <position position="364"/>
    </location>
    <ligand>
        <name>Ni(2+)</name>
        <dbReference type="ChEBI" id="CHEBI:49786"/>
        <label>1</label>
    </ligand>
</feature>
<feature type="modified residue" description="N6-carboxylysine" evidence="1">
    <location>
        <position position="221"/>
    </location>
</feature>
<sequence length="572" mass="61857">MSFKMDREEYAQHYGPTVGDSVRLGDTNLFAAIEKDFTVYGQESKFGGGKVLRDGMGVSATETRDNPSVVDTIITGATIIDYTGIIKADIGIRDGKIVAIGRGGNPDTMDNVDFVVGASTEAIAAEGLIVTAGGIDLHVHYISADLPEFGMDNGITTLFGGGTGPADGSNATTCTPGKFHITRMLQAVDDMPANFGFLAKGVGSETEVVEEQIKAGAAGIKTHEDWGATYAGIDNSLKVADKYDVSFAVHTDSLNEGGFMENTLESFQGRTVHTFHTEGSGGGHAPDIMVFAGKENILPSSTNPTNPYTTNAIGELLDMVMVCHHLDPKIPEDVSFAESRVRKQTVAAEDVLHDMGALSIMTSDAMAMGRVGEVVMRCWQLADKMKAQRGPLEGDSEFNDNNRIKRYVAKYTINPAITNGIADYIGSVEVGKFADLVIWEPAQFGAKPKLVLKGGMLTYGVMGDAGSSLPTPQPRIMRKLYGAYGQAVHKTNITFVSQYAYDHGIKEEIGLNKIVLPVKNTRNLTKRDMKLNDYAPKTIRIDPQTFDVFIDDELVTCEPIHTTSLSQRYFLF</sequence>
<keyword id="KW-0963">Cytoplasm</keyword>
<keyword id="KW-0378">Hydrolase</keyword>
<keyword id="KW-0479">Metal-binding</keyword>
<keyword id="KW-0533">Nickel</keyword>
<comment type="catalytic activity">
    <reaction evidence="1">
        <text>urea + 2 H2O + H(+) = hydrogencarbonate + 2 NH4(+)</text>
        <dbReference type="Rhea" id="RHEA:20557"/>
        <dbReference type="ChEBI" id="CHEBI:15377"/>
        <dbReference type="ChEBI" id="CHEBI:15378"/>
        <dbReference type="ChEBI" id="CHEBI:16199"/>
        <dbReference type="ChEBI" id="CHEBI:17544"/>
        <dbReference type="ChEBI" id="CHEBI:28938"/>
        <dbReference type="EC" id="3.5.1.5"/>
    </reaction>
</comment>
<comment type="cofactor">
    <cofactor evidence="1">
        <name>Ni cation</name>
        <dbReference type="ChEBI" id="CHEBI:25516"/>
    </cofactor>
    <text evidence="1">Binds 2 nickel ions per subunit.</text>
</comment>
<comment type="pathway">
    <text evidence="1">Nitrogen metabolism; urea degradation; CO(2) and NH(3) from urea (urease route): step 1/1.</text>
</comment>
<comment type="subunit">
    <text evidence="1">Heterotrimer of UreA (gamma), UreB (beta) and UreC (alpha) subunits. Three heterotrimers associate to form the active enzyme.</text>
</comment>
<comment type="subcellular location">
    <subcellularLocation>
        <location evidence="1">Cytoplasm</location>
    </subcellularLocation>
</comment>
<comment type="PTM">
    <text evidence="1">Carboxylation allows a single lysine to coordinate two nickel ions.</text>
</comment>
<comment type="similarity">
    <text evidence="1">Belongs to the metallo-dependent hydrolases superfamily. Urease alpha subunit family.</text>
</comment>
<reference key="1">
    <citation type="journal article" date="2004" name="Nat. Biotechnol.">
        <title>Complete sequence and comparative genome analysis of the dairy bacterium Streptococcus thermophilus.</title>
        <authorList>
            <person name="Bolotin A."/>
            <person name="Quinquis B."/>
            <person name="Renault P."/>
            <person name="Sorokin A."/>
            <person name="Ehrlich S.D."/>
            <person name="Kulakauskas S."/>
            <person name="Lapidus A."/>
            <person name="Goltsman E."/>
            <person name="Mazur M."/>
            <person name="Pusch G.D."/>
            <person name="Fonstein M."/>
            <person name="Overbeek R."/>
            <person name="Kyprides N."/>
            <person name="Purnelle B."/>
            <person name="Prozzi D."/>
            <person name="Ngui K."/>
            <person name="Masuy D."/>
            <person name="Hancy F."/>
            <person name="Burteau S."/>
            <person name="Boutry M."/>
            <person name="Delcour J."/>
            <person name="Goffeau A."/>
            <person name="Hols P."/>
        </authorList>
    </citation>
    <scope>NUCLEOTIDE SEQUENCE [LARGE SCALE GENOMIC DNA]</scope>
    <source>
        <strain>CNRZ 1066</strain>
    </source>
</reference>
<proteinExistence type="inferred from homology"/>
<accession>Q5M1G6</accession>
<organism>
    <name type="scientific">Streptococcus thermophilus (strain CNRZ 1066)</name>
    <dbReference type="NCBI Taxonomy" id="299768"/>
    <lineage>
        <taxon>Bacteria</taxon>
        <taxon>Bacillati</taxon>
        <taxon>Bacillota</taxon>
        <taxon>Bacilli</taxon>
        <taxon>Lactobacillales</taxon>
        <taxon>Streptococcaceae</taxon>
        <taxon>Streptococcus</taxon>
    </lineage>
</organism>
<name>URE1_STRT1</name>
<dbReference type="EC" id="3.5.1.5" evidence="1"/>
<dbReference type="EMBL" id="CP000024">
    <property type="protein sequence ID" value="AAV61895.1"/>
    <property type="molecule type" value="Genomic_DNA"/>
</dbReference>
<dbReference type="RefSeq" id="WP_002949548.1">
    <property type="nucleotide sequence ID" value="NC_006449.1"/>
</dbReference>
<dbReference type="SMR" id="Q5M1G6"/>
<dbReference type="MEROPS" id="M38.982"/>
<dbReference type="GeneID" id="66898208"/>
<dbReference type="KEGG" id="stc:str0283"/>
<dbReference type="HOGENOM" id="CLU_000980_0_0_9"/>
<dbReference type="UniPathway" id="UPA00258">
    <property type="reaction ID" value="UER00370"/>
</dbReference>
<dbReference type="GO" id="GO:0005737">
    <property type="term" value="C:cytoplasm"/>
    <property type="evidence" value="ECO:0007669"/>
    <property type="project" value="UniProtKB-SubCell"/>
</dbReference>
<dbReference type="GO" id="GO:0016151">
    <property type="term" value="F:nickel cation binding"/>
    <property type="evidence" value="ECO:0007669"/>
    <property type="project" value="UniProtKB-UniRule"/>
</dbReference>
<dbReference type="GO" id="GO:0009039">
    <property type="term" value="F:urease activity"/>
    <property type="evidence" value="ECO:0007669"/>
    <property type="project" value="UniProtKB-UniRule"/>
</dbReference>
<dbReference type="GO" id="GO:0043419">
    <property type="term" value="P:urea catabolic process"/>
    <property type="evidence" value="ECO:0007669"/>
    <property type="project" value="UniProtKB-UniRule"/>
</dbReference>
<dbReference type="CDD" id="cd00375">
    <property type="entry name" value="Urease_alpha"/>
    <property type="match status" value="1"/>
</dbReference>
<dbReference type="Gene3D" id="3.20.20.140">
    <property type="entry name" value="Metal-dependent hydrolases"/>
    <property type="match status" value="1"/>
</dbReference>
<dbReference type="Gene3D" id="2.30.40.10">
    <property type="entry name" value="Urease, subunit C, domain 1"/>
    <property type="match status" value="1"/>
</dbReference>
<dbReference type="HAMAP" id="MF_01953">
    <property type="entry name" value="Urease_alpha"/>
    <property type="match status" value="1"/>
</dbReference>
<dbReference type="InterPro" id="IPR006680">
    <property type="entry name" value="Amidohydro-rel"/>
</dbReference>
<dbReference type="InterPro" id="IPR011059">
    <property type="entry name" value="Metal-dep_hydrolase_composite"/>
</dbReference>
<dbReference type="InterPro" id="IPR032466">
    <property type="entry name" value="Metal_Hydrolase"/>
</dbReference>
<dbReference type="InterPro" id="IPR011612">
    <property type="entry name" value="Urease_alpha_N_dom"/>
</dbReference>
<dbReference type="InterPro" id="IPR050112">
    <property type="entry name" value="Urease_alpha_subunit"/>
</dbReference>
<dbReference type="InterPro" id="IPR017950">
    <property type="entry name" value="Urease_AS"/>
</dbReference>
<dbReference type="InterPro" id="IPR005848">
    <property type="entry name" value="Urease_asu"/>
</dbReference>
<dbReference type="InterPro" id="IPR017951">
    <property type="entry name" value="Urease_asu_c"/>
</dbReference>
<dbReference type="InterPro" id="IPR029754">
    <property type="entry name" value="Urease_Ni-bd"/>
</dbReference>
<dbReference type="NCBIfam" id="NF009686">
    <property type="entry name" value="PRK13207.1"/>
    <property type="match status" value="1"/>
</dbReference>
<dbReference type="NCBIfam" id="TIGR01792">
    <property type="entry name" value="urease_alph"/>
    <property type="match status" value="1"/>
</dbReference>
<dbReference type="PANTHER" id="PTHR43440">
    <property type="entry name" value="UREASE"/>
    <property type="match status" value="1"/>
</dbReference>
<dbReference type="PANTHER" id="PTHR43440:SF1">
    <property type="entry name" value="UREASE"/>
    <property type="match status" value="1"/>
</dbReference>
<dbReference type="Pfam" id="PF01979">
    <property type="entry name" value="Amidohydro_1"/>
    <property type="match status" value="1"/>
</dbReference>
<dbReference type="Pfam" id="PF00449">
    <property type="entry name" value="Urease_alpha"/>
    <property type="match status" value="1"/>
</dbReference>
<dbReference type="PRINTS" id="PR01752">
    <property type="entry name" value="UREASE"/>
</dbReference>
<dbReference type="SUPFAM" id="SSF51338">
    <property type="entry name" value="Composite domain of metallo-dependent hydrolases"/>
    <property type="match status" value="1"/>
</dbReference>
<dbReference type="SUPFAM" id="SSF51556">
    <property type="entry name" value="Metallo-dependent hydrolases"/>
    <property type="match status" value="1"/>
</dbReference>
<dbReference type="PROSITE" id="PS01120">
    <property type="entry name" value="UREASE_1"/>
    <property type="match status" value="1"/>
</dbReference>
<dbReference type="PROSITE" id="PS00145">
    <property type="entry name" value="UREASE_2"/>
    <property type="match status" value="1"/>
</dbReference>
<dbReference type="PROSITE" id="PS51368">
    <property type="entry name" value="UREASE_3"/>
    <property type="match status" value="1"/>
</dbReference>